<accession>P60555</accession>
<gene>
    <name evidence="1" type="primary">gmk</name>
    <name type="ordered locus">PMT_1318</name>
</gene>
<evidence type="ECO:0000255" key="1">
    <source>
        <dbReference type="HAMAP-Rule" id="MF_00328"/>
    </source>
</evidence>
<comment type="function">
    <text evidence="1">Essential for recycling GMP and indirectly, cGMP.</text>
</comment>
<comment type="catalytic activity">
    <reaction evidence="1">
        <text>GMP + ATP = GDP + ADP</text>
        <dbReference type="Rhea" id="RHEA:20780"/>
        <dbReference type="ChEBI" id="CHEBI:30616"/>
        <dbReference type="ChEBI" id="CHEBI:58115"/>
        <dbReference type="ChEBI" id="CHEBI:58189"/>
        <dbReference type="ChEBI" id="CHEBI:456216"/>
        <dbReference type="EC" id="2.7.4.8"/>
    </reaction>
</comment>
<comment type="subcellular location">
    <subcellularLocation>
        <location evidence="1">Cytoplasm</location>
    </subcellularLocation>
</comment>
<comment type="similarity">
    <text evidence="1">Belongs to the guanylate kinase family.</text>
</comment>
<reference key="1">
    <citation type="journal article" date="2003" name="Nature">
        <title>Genome divergence in two Prochlorococcus ecotypes reflects oceanic niche differentiation.</title>
        <authorList>
            <person name="Rocap G."/>
            <person name="Larimer F.W."/>
            <person name="Lamerdin J.E."/>
            <person name="Malfatti S."/>
            <person name="Chain P."/>
            <person name="Ahlgren N.A."/>
            <person name="Arellano A."/>
            <person name="Coleman M."/>
            <person name="Hauser L."/>
            <person name="Hess W.R."/>
            <person name="Johnson Z.I."/>
            <person name="Land M.L."/>
            <person name="Lindell D."/>
            <person name="Post A.F."/>
            <person name="Regala W."/>
            <person name="Shah M."/>
            <person name="Shaw S.L."/>
            <person name="Steglich C."/>
            <person name="Sullivan M.B."/>
            <person name="Ting C.S."/>
            <person name="Tolonen A."/>
            <person name="Webb E.A."/>
            <person name="Zinser E.R."/>
            <person name="Chisholm S.W."/>
        </authorList>
    </citation>
    <scope>NUCLEOTIDE SEQUENCE [LARGE SCALE GENOMIC DNA]</scope>
    <source>
        <strain>MIT 9313</strain>
    </source>
</reference>
<keyword id="KW-0067">ATP-binding</keyword>
<keyword id="KW-0963">Cytoplasm</keyword>
<keyword id="KW-0418">Kinase</keyword>
<keyword id="KW-0547">Nucleotide-binding</keyword>
<keyword id="KW-1185">Reference proteome</keyword>
<keyword id="KW-0808">Transferase</keyword>
<feature type="chain" id="PRO_0000170585" description="Guanylate kinase">
    <location>
        <begin position="1"/>
        <end position="189"/>
    </location>
</feature>
<feature type="domain" description="Guanylate kinase-like" evidence="1">
    <location>
        <begin position="8"/>
        <end position="186"/>
    </location>
</feature>
<feature type="binding site" evidence="1">
    <location>
        <begin position="15"/>
        <end position="22"/>
    </location>
    <ligand>
        <name>ATP</name>
        <dbReference type="ChEBI" id="CHEBI:30616"/>
    </ligand>
</feature>
<protein>
    <recommendedName>
        <fullName evidence="1">Guanylate kinase</fullName>
        <ecNumber evidence="1">2.7.4.8</ecNumber>
    </recommendedName>
    <alternativeName>
        <fullName evidence="1">GMP kinase</fullName>
    </alternativeName>
</protein>
<organism>
    <name type="scientific">Prochlorococcus marinus (strain MIT 9313)</name>
    <dbReference type="NCBI Taxonomy" id="74547"/>
    <lineage>
        <taxon>Bacteria</taxon>
        <taxon>Bacillati</taxon>
        <taxon>Cyanobacteriota</taxon>
        <taxon>Cyanophyceae</taxon>
        <taxon>Synechococcales</taxon>
        <taxon>Prochlorococcaceae</taxon>
        <taxon>Prochlorococcus</taxon>
    </lineage>
</organism>
<name>KGUA_PROMM</name>
<dbReference type="EC" id="2.7.4.8" evidence="1"/>
<dbReference type="EMBL" id="BX548175">
    <property type="status" value="NOT_ANNOTATED_CDS"/>
    <property type="molecule type" value="Genomic_DNA"/>
</dbReference>
<dbReference type="RefSeq" id="WP_011130686.1">
    <property type="nucleotide sequence ID" value="NC_005071.1"/>
</dbReference>
<dbReference type="SMR" id="P60555"/>
<dbReference type="eggNOG" id="COG0194">
    <property type="taxonomic scope" value="Bacteria"/>
</dbReference>
<dbReference type="OrthoDB" id="9808150at2"/>
<dbReference type="Proteomes" id="UP000001423">
    <property type="component" value="Chromosome"/>
</dbReference>
<dbReference type="GO" id="GO:0005829">
    <property type="term" value="C:cytosol"/>
    <property type="evidence" value="ECO:0007669"/>
    <property type="project" value="TreeGrafter"/>
</dbReference>
<dbReference type="GO" id="GO:0005524">
    <property type="term" value="F:ATP binding"/>
    <property type="evidence" value="ECO:0007669"/>
    <property type="project" value="UniProtKB-UniRule"/>
</dbReference>
<dbReference type="GO" id="GO:0004385">
    <property type="term" value="F:guanylate kinase activity"/>
    <property type="evidence" value="ECO:0007669"/>
    <property type="project" value="UniProtKB-UniRule"/>
</dbReference>
<dbReference type="CDD" id="cd00071">
    <property type="entry name" value="GMPK"/>
    <property type="match status" value="1"/>
</dbReference>
<dbReference type="FunFam" id="3.30.63.10:FF:000002">
    <property type="entry name" value="Guanylate kinase 1"/>
    <property type="match status" value="1"/>
</dbReference>
<dbReference type="Gene3D" id="3.30.63.10">
    <property type="entry name" value="Guanylate Kinase phosphate binding domain"/>
    <property type="match status" value="1"/>
</dbReference>
<dbReference type="Gene3D" id="3.40.50.300">
    <property type="entry name" value="P-loop containing nucleotide triphosphate hydrolases"/>
    <property type="match status" value="1"/>
</dbReference>
<dbReference type="HAMAP" id="MF_00328">
    <property type="entry name" value="Guanylate_kinase"/>
    <property type="match status" value="1"/>
</dbReference>
<dbReference type="InterPro" id="IPR008145">
    <property type="entry name" value="GK/Ca_channel_bsu"/>
</dbReference>
<dbReference type="InterPro" id="IPR008144">
    <property type="entry name" value="Guanylate_kin-like_dom"/>
</dbReference>
<dbReference type="InterPro" id="IPR017665">
    <property type="entry name" value="Guanylate_kinase"/>
</dbReference>
<dbReference type="InterPro" id="IPR020590">
    <property type="entry name" value="Guanylate_kinase_CS"/>
</dbReference>
<dbReference type="InterPro" id="IPR027417">
    <property type="entry name" value="P-loop_NTPase"/>
</dbReference>
<dbReference type="NCBIfam" id="TIGR03263">
    <property type="entry name" value="guanyl_kin"/>
    <property type="match status" value="1"/>
</dbReference>
<dbReference type="PANTHER" id="PTHR23117:SF13">
    <property type="entry name" value="GUANYLATE KINASE"/>
    <property type="match status" value="1"/>
</dbReference>
<dbReference type="PANTHER" id="PTHR23117">
    <property type="entry name" value="GUANYLATE KINASE-RELATED"/>
    <property type="match status" value="1"/>
</dbReference>
<dbReference type="Pfam" id="PF00625">
    <property type="entry name" value="Guanylate_kin"/>
    <property type="match status" value="1"/>
</dbReference>
<dbReference type="SMART" id="SM00072">
    <property type="entry name" value="GuKc"/>
    <property type="match status" value="1"/>
</dbReference>
<dbReference type="SUPFAM" id="SSF52540">
    <property type="entry name" value="P-loop containing nucleoside triphosphate hydrolases"/>
    <property type="match status" value="1"/>
</dbReference>
<dbReference type="PROSITE" id="PS00856">
    <property type="entry name" value="GUANYLATE_KINASE_1"/>
    <property type="match status" value="1"/>
</dbReference>
<dbReference type="PROSITE" id="PS50052">
    <property type="entry name" value="GUANYLATE_KINASE_2"/>
    <property type="match status" value="1"/>
</dbReference>
<sequence>MASSAAEGKLTVITGPSGVGKGSLVKQLLELHPEIWLSISATTREARQGEIEGDHYFFLNRDRFAELVQAGGCLEWAEFAGNRYGTPRQPVEQQLSLGRPVLLEIELEGARQVRRSFPEAFQIFLAPPSFEELERRIRGRATDPEEAIQRRLARAREELMAQQEFDAVVINDNLQVAVIELESLMGLSC</sequence>
<proteinExistence type="inferred from homology"/>